<evidence type="ECO:0000250" key="1">
    <source>
        <dbReference type="UniProtKB" id="P50389"/>
    </source>
</evidence>
<evidence type="ECO:0000255" key="2">
    <source>
        <dbReference type="HAMAP-Rule" id="MF_01627"/>
    </source>
</evidence>
<reference key="1">
    <citation type="journal article" date="2009" name="J. Bacteriol.">
        <title>Complete genome sequence and comparative genome analysis of enteropathogenic Escherichia coli O127:H6 strain E2348/69.</title>
        <authorList>
            <person name="Iguchi A."/>
            <person name="Thomson N.R."/>
            <person name="Ogura Y."/>
            <person name="Saunders D."/>
            <person name="Ooka T."/>
            <person name="Henderson I.R."/>
            <person name="Harris D."/>
            <person name="Asadulghani M."/>
            <person name="Kurokawa K."/>
            <person name="Dean P."/>
            <person name="Kenny B."/>
            <person name="Quail M.A."/>
            <person name="Thurston S."/>
            <person name="Dougan G."/>
            <person name="Hayashi T."/>
            <person name="Parkhill J."/>
            <person name="Frankel G."/>
        </authorList>
    </citation>
    <scope>NUCLEOTIDE SEQUENCE [LARGE SCALE GENOMIC DNA]</scope>
    <source>
        <strain>E2348/69 / EPEC</strain>
    </source>
</reference>
<dbReference type="EC" id="2.4.2.1" evidence="2"/>
<dbReference type="EMBL" id="FM180568">
    <property type="protein sequence ID" value="CAS12230.1"/>
    <property type="molecule type" value="Genomic_DNA"/>
</dbReference>
<dbReference type="RefSeq" id="WP_000224879.1">
    <property type="nucleotide sequence ID" value="NC_011601.1"/>
</dbReference>
<dbReference type="SMR" id="B7UR12"/>
<dbReference type="KEGG" id="ecg:E2348C_4682"/>
<dbReference type="HOGENOM" id="CLU_068457_2_0_6"/>
<dbReference type="Proteomes" id="UP000008205">
    <property type="component" value="Chromosome"/>
</dbReference>
<dbReference type="GO" id="GO:0005829">
    <property type="term" value="C:cytosol"/>
    <property type="evidence" value="ECO:0007669"/>
    <property type="project" value="TreeGrafter"/>
</dbReference>
<dbReference type="GO" id="GO:0004731">
    <property type="term" value="F:purine-nucleoside phosphorylase activity"/>
    <property type="evidence" value="ECO:0007669"/>
    <property type="project" value="UniProtKB-UniRule"/>
</dbReference>
<dbReference type="GO" id="GO:0006152">
    <property type="term" value="P:purine nucleoside catabolic process"/>
    <property type="evidence" value="ECO:0007669"/>
    <property type="project" value="TreeGrafter"/>
</dbReference>
<dbReference type="CDD" id="cd09006">
    <property type="entry name" value="PNP_EcPNPI-like"/>
    <property type="match status" value="1"/>
</dbReference>
<dbReference type="FunFam" id="3.40.50.1580:FF:000002">
    <property type="entry name" value="Purine nucleoside phosphorylase DeoD-type"/>
    <property type="match status" value="1"/>
</dbReference>
<dbReference type="Gene3D" id="3.40.50.1580">
    <property type="entry name" value="Nucleoside phosphorylase domain"/>
    <property type="match status" value="1"/>
</dbReference>
<dbReference type="HAMAP" id="MF_01627">
    <property type="entry name" value="Pur_nucleosid_phosp"/>
    <property type="match status" value="1"/>
</dbReference>
<dbReference type="InterPro" id="IPR004402">
    <property type="entry name" value="DeoD-type"/>
</dbReference>
<dbReference type="InterPro" id="IPR018016">
    <property type="entry name" value="Nucleoside_phosphorylase_CS"/>
</dbReference>
<dbReference type="InterPro" id="IPR000845">
    <property type="entry name" value="Nucleoside_phosphorylase_d"/>
</dbReference>
<dbReference type="InterPro" id="IPR035994">
    <property type="entry name" value="Nucleoside_phosphorylase_sf"/>
</dbReference>
<dbReference type="NCBIfam" id="TIGR00107">
    <property type="entry name" value="deoD"/>
    <property type="match status" value="1"/>
</dbReference>
<dbReference type="NCBIfam" id="NF004489">
    <property type="entry name" value="PRK05819.1"/>
    <property type="match status" value="1"/>
</dbReference>
<dbReference type="NCBIfam" id="NF009914">
    <property type="entry name" value="PRK13374.1"/>
    <property type="match status" value="1"/>
</dbReference>
<dbReference type="PANTHER" id="PTHR43691:SF2">
    <property type="entry name" value="PURINE NUCLEOSIDE PHOSPHORYLASE DEOD-TYPE"/>
    <property type="match status" value="1"/>
</dbReference>
<dbReference type="PANTHER" id="PTHR43691">
    <property type="entry name" value="URIDINE PHOSPHORYLASE"/>
    <property type="match status" value="1"/>
</dbReference>
<dbReference type="Pfam" id="PF01048">
    <property type="entry name" value="PNP_UDP_1"/>
    <property type="match status" value="1"/>
</dbReference>
<dbReference type="SUPFAM" id="SSF53167">
    <property type="entry name" value="Purine and uridine phosphorylases"/>
    <property type="match status" value="1"/>
</dbReference>
<dbReference type="PROSITE" id="PS01232">
    <property type="entry name" value="PNP_UDP_1"/>
    <property type="match status" value="1"/>
</dbReference>
<accession>B7UR12</accession>
<sequence>MATPHINAEMGDFADVVLMPGDPLRAKYIAETFLEDAREVNNVRGMLGFTGTYKGRKISVMGHGMGIPSCSIYTKELITDFGVKKIIRVGSCGAVLPHVKLRDVVIGMGACTDSKVNRIRFKDHDFAAIADFDMVRNAVDAAKALGVDARVGNLFSADLFYSPDGEMFDVMEKYGILGVEMEAAGIYGVAAEFGAKALTICTVSDHIRTHEQTTAAERQTTFNDMIKIALESVLLGDKE</sequence>
<proteinExistence type="inferred from homology"/>
<protein>
    <recommendedName>
        <fullName evidence="2">Purine nucleoside phosphorylase DeoD-type</fullName>
        <shortName evidence="2">PNP</shortName>
        <ecNumber evidence="2">2.4.2.1</ecNumber>
    </recommendedName>
</protein>
<comment type="function">
    <text evidence="2">Catalyzes the reversible phosphorolytic breakdown of the N-glycosidic bond in the beta-(deoxy)ribonucleoside molecules, with the formation of the corresponding free purine bases and pentose-1-phosphate.</text>
</comment>
<comment type="catalytic activity">
    <reaction evidence="2">
        <text>a purine D-ribonucleoside + phosphate = a purine nucleobase + alpha-D-ribose 1-phosphate</text>
        <dbReference type="Rhea" id="RHEA:19805"/>
        <dbReference type="ChEBI" id="CHEBI:26386"/>
        <dbReference type="ChEBI" id="CHEBI:43474"/>
        <dbReference type="ChEBI" id="CHEBI:57720"/>
        <dbReference type="ChEBI" id="CHEBI:142355"/>
        <dbReference type="EC" id="2.4.2.1"/>
    </reaction>
</comment>
<comment type="catalytic activity">
    <reaction evidence="2">
        <text>a purine 2'-deoxy-D-ribonucleoside + phosphate = a purine nucleobase + 2-deoxy-alpha-D-ribose 1-phosphate</text>
        <dbReference type="Rhea" id="RHEA:36431"/>
        <dbReference type="ChEBI" id="CHEBI:26386"/>
        <dbReference type="ChEBI" id="CHEBI:43474"/>
        <dbReference type="ChEBI" id="CHEBI:57259"/>
        <dbReference type="ChEBI" id="CHEBI:142361"/>
        <dbReference type="EC" id="2.4.2.1"/>
    </reaction>
</comment>
<comment type="subunit">
    <text evidence="2">Homohexamer; trimer of homodimers.</text>
</comment>
<comment type="similarity">
    <text evidence="2">Belongs to the PNP/UDP phosphorylase family.</text>
</comment>
<feature type="chain" id="PRO_1000186184" description="Purine nucleoside phosphorylase DeoD-type">
    <location>
        <begin position="1"/>
        <end position="239"/>
    </location>
</feature>
<feature type="active site" description="Proton donor" evidence="2">
    <location>
        <position position="205"/>
    </location>
</feature>
<feature type="binding site" evidence="1">
    <location>
        <position position="5"/>
    </location>
    <ligand>
        <name>a purine D-ribonucleoside</name>
        <dbReference type="ChEBI" id="CHEBI:142355"/>
        <note>ligand shared between dimeric partners</note>
    </ligand>
</feature>
<feature type="binding site" description="in other chain" evidence="1">
    <location>
        <position position="21"/>
    </location>
    <ligand>
        <name>phosphate</name>
        <dbReference type="ChEBI" id="CHEBI:43474"/>
        <note>ligand shared between dimeric partners</note>
    </ligand>
</feature>
<feature type="binding site" description="in other chain" evidence="1">
    <location>
        <position position="25"/>
    </location>
    <ligand>
        <name>phosphate</name>
        <dbReference type="ChEBI" id="CHEBI:43474"/>
        <note>ligand shared between dimeric partners</note>
    </ligand>
</feature>
<feature type="binding site" evidence="1">
    <location>
        <position position="44"/>
    </location>
    <ligand>
        <name>phosphate</name>
        <dbReference type="ChEBI" id="CHEBI:43474"/>
        <note>ligand shared between dimeric partners</note>
    </ligand>
</feature>
<feature type="binding site" description="in other chain" evidence="1">
    <location>
        <begin position="88"/>
        <end position="91"/>
    </location>
    <ligand>
        <name>phosphate</name>
        <dbReference type="ChEBI" id="CHEBI:43474"/>
        <note>ligand shared between dimeric partners</note>
    </ligand>
</feature>
<feature type="binding site" description="in other chain" evidence="1">
    <location>
        <begin position="180"/>
        <end position="182"/>
    </location>
    <ligand>
        <name>a purine D-ribonucleoside</name>
        <dbReference type="ChEBI" id="CHEBI:142355"/>
        <note>ligand shared between dimeric partners</note>
    </ligand>
</feature>
<feature type="binding site" description="in other chain" evidence="1">
    <location>
        <begin position="204"/>
        <end position="205"/>
    </location>
    <ligand>
        <name>a purine D-ribonucleoside</name>
        <dbReference type="ChEBI" id="CHEBI:142355"/>
        <note>ligand shared between dimeric partners</note>
    </ligand>
</feature>
<feature type="site" description="Important for catalytic activity" evidence="2">
    <location>
        <position position="218"/>
    </location>
</feature>
<feature type="modified residue" description="N6-acetyllysine" evidence="2">
    <location>
        <position position="27"/>
    </location>
</feature>
<keyword id="KW-0007">Acetylation</keyword>
<keyword id="KW-0328">Glycosyltransferase</keyword>
<keyword id="KW-1185">Reference proteome</keyword>
<keyword id="KW-0808">Transferase</keyword>
<organism>
    <name type="scientific">Escherichia coli O127:H6 (strain E2348/69 / EPEC)</name>
    <dbReference type="NCBI Taxonomy" id="574521"/>
    <lineage>
        <taxon>Bacteria</taxon>
        <taxon>Pseudomonadati</taxon>
        <taxon>Pseudomonadota</taxon>
        <taxon>Gammaproteobacteria</taxon>
        <taxon>Enterobacterales</taxon>
        <taxon>Enterobacteriaceae</taxon>
        <taxon>Escherichia</taxon>
    </lineage>
</organism>
<gene>
    <name evidence="2" type="primary">deoD</name>
    <name type="ordered locus">E2348C_4682</name>
</gene>
<name>DEOD_ECO27</name>